<proteinExistence type="inferred from homology"/>
<dbReference type="EMBL" id="AAFI02000006">
    <property type="protein sequence ID" value="EDR41108.1"/>
    <property type="molecule type" value="Genomic_DNA"/>
</dbReference>
<dbReference type="RefSeq" id="XP_001732966.1">
    <property type="nucleotide sequence ID" value="XM_001732914.1"/>
</dbReference>
<dbReference type="SMR" id="B0G104"/>
<dbReference type="FunCoup" id="B0G104">
    <property type="interactions" value="583"/>
</dbReference>
<dbReference type="STRING" id="44689.B0G104"/>
<dbReference type="PaxDb" id="44689-DDB0235213"/>
<dbReference type="EnsemblProtists" id="EDR41108">
    <property type="protein sequence ID" value="EDR41108"/>
    <property type="gene ID" value="DDB_G0295477"/>
</dbReference>
<dbReference type="GeneID" id="8618043"/>
<dbReference type="KEGG" id="ddi:DDB_G0295477"/>
<dbReference type="dictyBase" id="DDB_G0295477">
    <property type="gene designation" value="nip7"/>
</dbReference>
<dbReference type="VEuPathDB" id="AmoebaDB:DDB_G0295477"/>
<dbReference type="eggNOG" id="KOG3492">
    <property type="taxonomic scope" value="Eukaryota"/>
</dbReference>
<dbReference type="HOGENOM" id="CLU_097217_0_0_1"/>
<dbReference type="InParanoid" id="B0G104"/>
<dbReference type="OMA" id="LISMGTC"/>
<dbReference type="PhylomeDB" id="B0G104"/>
<dbReference type="PRO" id="PR:B0G104"/>
<dbReference type="Proteomes" id="UP000002195">
    <property type="component" value="Chromosome 2"/>
</dbReference>
<dbReference type="GO" id="GO:0005730">
    <property type="term" value="C:nucleolus"/>
    <property type="evidence" value="ECO:0000318"/>
    <property type="project" value="GO_Central"/>
</dbReference>
<dbReference type="GO" id="GO:0030687">
    <property type="term" value="C:preribosome, large subunit precursor"/>
    <property type="evidence" value="ECO:0000318"/>
    <property type="project" value="GO_Central"/>
</dbReference>
<dbReference type="GO" id="GO:0003723">
    <property type="term" value="F:RNA binding"/>
    <property type="evidence" value="ECO:0007669"/>
    <property type="project" value="UniProtKB-KW"/>
</dbReference>
<dbReference type="GO" id="GO:0042273">
    <property type="term" value="P:ribosomal large subunit biogenesis"/>
    <property type="evidence" value="ECO:0000250"/>
    <property type="project" value="dictyBase"/>
</dbReference>
<dbReference type="GO" id="GO:0042255">
    <property type="term" value="P:ribosome assembly"/>
    <property type="evidence" value="ECO:0007669"/>
    <property type="project" value="InterPro"/>
</dbReference>
<dbReference type="CDD" id="cd21146">
    <property type="entry name" value="Nip7_N_euk"/>
    <property type="match status" value="1"/>
</dbReference>
<dbReference type="CDD" id="cd21151">
    <property type="entry name" value="PUA_Nip7-like"/>
    <property type="match status" value="1"/>
</dbReference>
<dbReference type="FunFam" id="2.30.130.10:FF:000002">
    <property type="entry name" value="60S ribosome subunit biogenesis protein NIP7 homolog"/>
    <property type="match status" value="1"/>
</dbReference>
<dbReference type="FunFam" id="3.10.450.220:FF:000001">
    <property type="entry name" value="60S ribosome subunit biogenesis protein NIP7 homolog"/>
    <property type="match status" value="1"/>
</dbReference>
<dbReference type="Gene3D" id="3.10.450.220">
    <property type="match status" value="1"/>
</dbReference>
<dbReference type="Gene3D" id="2.30.130.10">
    <property type="entry name" value="PUA domain"/>
    <property type="match status" value="1"/>
</dbReference>
<dbReference type="InterPro" id="IPR040598">
    <property type="entry name" value="NIP7_N"/>
</dbReference>
<dbReference type="InterPro" id="IPR055359">
    <property type="entry name" value="Nip7_N_euk"/>
</dbReference>
<dbReference type="InterPro" id="IPR002478">
    <property type="entry name" value="PUA"/>
</dbReference>
<dbReference type="InterPro" id="IPR015947">
    <property type="entry name" value="PUA-like_sf"/>
</dbReference>
<dbReference type="InterPro" id="IPR036974">
    <property type="entry name" value="PUA_sf"/>
</dbReference>
<dbReference type="InterPro" id="IPR016686">
    <property type="entry name" value="Ribosomal_synth_fac_NIP7"/>
</dbReference>
<dbReference type="InterPro" id="IPR005155">
    <property type="entry name" value="UPF0113_PUA"/>
</dbReference>
<dbReference type="PANTHER" id="PTHR23415">
    <property type="entry name" value="CYCLIN-DEPENDENT KINASES REGULATORY SUBUNIT/60S RIBOSOME SUBUNIT BIOGENESIS PROTEIN NIP7"/>
    <property type="match status" value="1"/>
</dbReference>
<dbReference type="Pfam" id="PF17833">
    <property type="entry name" value="pre-PUA_NIP7"/>
    <property type="match status" value="1"/>
</dbReference>
<dbReference type="Pfam" id="PF03657">
    <property type="entry name" value="UPF0113"/>
    <property type="match status" value="1"/>
</dbReference>
<dbReference type="PIRSF" id="PIRSF017190">
    <property type="entry name" value="Rbsml_synth_fac_NIP7"/>
    <property type="match status" value="1"/>
</dbReference>
<dbReference type="SMART" id="SM00359">
    <property type="entry name" value="PUA"/>
    <property type="match status" value="1"/>
</dbReference>
<dbReference type="SUPFAM" id="SSF88802">
    <property type="entry name" value="Pre-PUA domain"/>
    <property type="match status" value="1"/>
</dbReference>
<dbReference type="SUPFAM" id="SSF88697">
    <property type="entry name" value="PUA domain-like"/>
    <property type="match status" value="1"/>
</dbReference>
<dbReference type="PROSITE" id="PS50890">
    <property type="entry name" value="PUA"/>
    <property type="match status" value="1"/>
</dbReference>
<protein>
    <recommendedName>
        <fullName>60S ribosome subunit biogenesis protein NIP7 homolog</fullName>
    </recommendedName>
</protein>
<organism>
    <name type="scientific">Dictyostelium discoideum</name>
    <name type="common">Social amoeba</name>
    <dbReference type="NCBI Taxonomy" id="44689"/>
    <lineage>
        <taxon>Eukaryota</taxon>
        <taxon>Amoebozoa</taxon>
        <taxon>Evosea</taxon>
        <taxon>Eumycetozoa</taxon>
        <taxon>Dictyostelia</taxon>
        <taxon>Dictyosteliales</taxon>
        <taxon>Dictyosteliaceae</taxon>
        <taxon>Dictyostelium</taxon>
    </lineage>
</organism>
<keyword id="KW-0539">Nucleus</keyword>
<keyword id="KW-1185">Reference proteome</keyword>
<keyword id="KW-0690">Ribosome biogenesis</keyword>
<keyword id="KW-0694">RNA-binding</keyword>
<sequence length="179" mass="20699">MRPMTEEESKTFFEKLIKFIGKNVTLLIQRKDEPYCFRIQKNKVYYVSEELMKRSQNIPREGLCSLGTCFGRFTKTGKFKLNITCLDYLAQYAKYKVWVKPSSEMSWMYGNNLLKAGLGRITEDTPANQGVVLFSMNDVPIGFGVTSKSTHECRKLDPQALVVYHYGDVGEYLRDEDIM</sequence>
<accession>B0G104</accession>
<accession>Q86JG8</accession>
<gene>
    <name type="primary">nip7</name>
    <name type="ORF">DDB_G0295477</name>
</gene>
<name>NIP7_DICDI</name>
<evidence type="ECO:0000250" key="1"/>
<evidence type="ECO:0000255" key="2">
    <source>
        <dbReference type="PROSITE-ProRule" id="PRU00161"/>
    </source>
</evidence>
<evidence type="ECO:0000305" key="3"/>
<reference key="1">
    <citation type="journal article" date="2002" name="Nature">
        <title>Sequence and analysis of chromosome 2 of Dictyostelium discoideum.</title>
        <authorList>
            <person name="Gloeckner G."/>
            <person name="Eichinger L."/>
            <person name="Szafranski K."/>
            <person name="Pachebat J.A."/>
            <person name="Bankier A.T."/>
            <person name="Dear P.H."/>
            <person name="Lehmann R."/>
            <person name="Baumgart C."/>
            <person name="Parra G."/>
            <person name="Abril J.F."/>
            <person name="Guigo R."/>
            <person name="Kumpf K."/>
            <person name="Tunggal B."/>
            <person name="Cox E.C."/>
            <person name="Quail M.A."/>
            <person name="Platzer M."/>
            <person name="Rosenthal A."/>
            <person name="Noegel A.A."/>
        </authorList>
    </citation>
    <scope>NUCLEOTIDE SEQUENCE [LARGE SCALE GENOMIC DNA]</scope>
    <source>
        <strain>AX4</strain>
    </source>
</reference>
<reference key="2">
    <citation type="journal article" date="2005" name="Nature">
        <title>The genome of the social amoeba Dictyostelium discoideum.</title>
        <authorList>
            <person name="Eichinger L."/>
            <person name="Pachebat J.A."/>
            <person name="Gloeckner G."/>
            <person name="Rajandream M.A."/>
            <person name="Sucgang R."/>
            <person name="Berriman M."/>
            <person name="Song J."/>
            <person name="Olsen R."/>
            <person name="Szafranski K."/>
            <person name="Xu Q."/>
            <person name="Tunggal B."/>
            <person name="Kummerfeld S."/>
            <person name="Madera M."/>
            <person name="Konfortov B.A."/>
            <person name="Rivero F."/>
            <person name="Bankier A.T."/>
            <person name="Lehmann R."/>
            <person name="Hamlin N."/>
            <person name="Davies R."/>
            <person name="Gaudet P."/>
            <person name="Fey P."/>
            <person name="Pilcher K."/>
            <person name="Chen G."/>
            <person name="Saunders D."/>
            <person name="Sodergren E.J."/>
            <person name="Davis P."/>
            <person name="Kerhornou A."/>
            <person name="Nie X."/>
            <person name="Hall N."/>
            <person name="Anjard C."/>
            <person name="Hemphill L."/>
            <person name="Bason N."/>
            <person name="Farbrother P."/>
            <person name="Desany B."/>
            <person name="Just E."/>
            <person name="Morio T."/>
            <person name="Rost R."/>
            <person name="Churcher C.M."/>
            <person name="Cooper J."/>
            <person name="Haydock S."/>
            <person name="van Driessche N."/>
            <person name="Cronin A."/>
            <person name="Goodhead I."/>
            <person name="Muzny D.M."/>
            <person name="Mourier T."/>
            <person name="Pain A."/>
            <person name="Lu M."/>
            <person name="Harper D."/>
            <person name="Lindsay R."/>
            <person name="Hauser H."/>
            <person name="James K.D."/>
            <person name="Quiles M."/>
            <person name="Madan Babu M."/>
            <person name="Saito T."/>
            <person name="Buchrieser C."/>
            <person name="Wardroper A."/>
            <person name="Felder M."/>
            <person name="Thangavelu M."/>
            <person name="Johnson D."/>
            <person name="Knights A."/>
            <person name="Loulseged H."/>
            <person name="Mungall K.L."/>
            <person name="Oliver K."/>
            <person name="Price C."/>
            <person name="Quail M.A."/>
            <person name="Urushihara H."/>
            <person name="Hernandez J."/>
            <person name="Rabbinowitsch E."/>
            <person name="Steffen D."/>
            <person name="Sanders M."/>
            <person name="Ma J."/>
            <person name="Kohara Y."/>
            <person name="Sharp S."/>
            <person name="Simmonds M.N."/>
            <person name="Spiegler S."/>
            <person name="Tivey A."/>
            <person name="Sugano S."/>
            <person name="White B."/>
            <person name="Walker D."/>
            <person name="Woodward J.R."/>
            <person name="Winckler T."/>
            <person name="Tanaka Y."/>
            <person name="Shaulsky G."/>
            <person name="Schleicher M."/>
            <person name="Weinstock G.M."/>
            <person name="Rosenthal A."/>
            <person name="Cox E.C."/>
            <person name="Chisholm R.L."/>
            <person name="Gibbs R.A."/>
            <person name="Loomis W.F."/>
            <person name="Platzer M."/>
            <person name="Kay R.R."/>
            <person name="Williams J.G."/>
            <person name="Dear P.H."/>
            <person name="Noegel A.A."/>
            <person name="Barrell B.G."/>
            <person name="Kuspa A."/>
        </authorList>
    </citation>
    <scope>NUCLEOTIDE SEQUENCE [LARGE SCALE GENOMIC DNA]</scope>
    <source>
        <strain>AX4</strain>
    </source>
</reference>
<comment type="function">
    <text evidence="1">Required for proper 27S pre-rRNA processing and 60S ribosome subunit assembly.</text>
</comment>
<comment type="subunit">
    <text evidence="1">Monomer. Interacts with pre-ribosome complex. May bind to RNA (By similarity).</text>
</comment>
<comment type="subcellular location">
    <subcellularLocation>
        <location evidence="1">Nucleus</location>
        <location evidence="1">Nucleolus</location>
    </subcellularLocation>
</comment>
<comment type="similarity">
    <text evidence="3">Belongs to the NIP7 family.</text>
</comment>
<feature type="chain" id="PRO_0000328001" description="60S ribosome subunit biogenesis protein NIP7 homolog">
    <location>
        <begin position="1"/>
        <end position="179"/>
    </location>
</feature>
<feature type="domain" description="PUA" evidence="2">
    <location>
        <begin position="94"/>
        <end position="170"/>
    </location>
</feature>